<protein>
    <recommendedName>
        <fullName evidence="7">Large ribosomal subunit protein uL30</fullName>
    </recommendedName>
    <alternativeName>
        <fullName>60S ribosomal protein L7</fullName>
    </alternativeName>
</protein>
<comment type="function">
    <text evidence="3 5 9">Component of the large ribosomal subunit (PubMed:12962325, PubMed:23636399, PubMed:32669547). The ribosome is a large ribonucleoprotein complex responsible for the synthesis of proteins in the cell (PubMed:12962325, PubMed:23636399, PubMed:32669547). Binds to G-rich structures in 28S rRNA and in mRNAs (PubMed:12962325). Plays a regulatory role in the translation apparatus; inhibits cell-free translation of mRNAs (PubMed:12962325).</text>
</comment>
<comment type="subunit">
    <text evidence="3 4 5 9">Component of the large ribosomal subunit (PubMed:12962325, PubMed:23636399, PubMed:32669547). Homodimer (PubMed:12962325). Interacts with DHX33 (PubMed:26100019).</text>
</comment>
<comment type="interaction">
    <interactant intactId="EBI-350806">
        <id>P18124</id>
    </interactant>
    <interactant intactId="EBI-356424">
        <id>O00410</id>
        <label>IPO5</label>
    </interactant>
    <organismsDiffer>false</organismsDiffer>
    <experiments>4</experiments>
</comment>
<comment type="interaction">
    <interactant intactId="EBI-350806">
        <id>P18124</id>
    </interactant>
    <interactant intactId="EBI-716247">
        <id>Q15843</id>
        <label>NEDD8</label>
    </interactant>
    <organismsDiffer>false</organismsDiffer>
    <experiments>2</experiments>
</comment>
<comment type="subcellular location">
    <subcellularLocation>
        <location evidence="3">Cytoplasm</location>
    </subcellularLocation>
</comment>
<comment type="similarity">
    <text evidence="8">Belongs to the universal ribosomal protein uL30 family.</text>
</comment>
<comment type="sequence caution" evidence="8">
    <conflict type="erroneous initiation">
        <sequence resource="EMBL-CDS" id="CAA41026"/>
    </conflict>
</comment>
<sequence>MEGVEEKKKEVPAVPETLKKKRRNFAELKIKRLRKKFAQKMLRKARRKLIYEKAKHYHKEYRQMYRTEIRMARMARKAGNFYVPAEPKLAFVIRIRGINGVSPKVRKVLQLLRLRQIFNGTFVKLNKASINMLRIVEPYIAWGYPNLKSVNELIYKRGYGKINKKRIALTDNALIARSLGKYGIICMEDLIHEIYTVGKRFKEANNFLWPFKLSSPRGGMKKKTTHFVEGGDAGNREDQINRLIRRMN</sequence>
<proteinExistence type="evidence at protein level"/>
<organism>
    <name type="scientific">Homo sapiens</name>
    <name type="common">Human</name>
    <dbReference type="NCBI Taxonomy" id="9606"/>
    <lineage>
        <taxon>Eukaryota</taxon>
        <taxon>Metazoa</taxon>
        <taxon>Chordata</taxon>
        <taxon>Craniata</taxon>
        <taxon>Vertebrata</taxon>
        <taxon>Euteleostomi</taxon>
        <taxon>Mammalia</taxon>
        <taxon>Eutheria</taxon>
        <taxon>Euarchontoglires</taxon>
        <taxon>Primates</taxon>
        <taxon>Haplorrhini</taxon>
        <taxon>Catarrhini</taxon>
        <taxon>Hominidae</taxon>
        <taxon>Homo</taxon>
    </lineage>
</organism>
<gene>
    <name type="primary">RPL7</name>
</gene>
<accession>P18124</accession>
<accession>A8K504</accession>
<accession>Q15289</accession>
<accession>Q3KQU0</accession>
<accession>Q5I0X1</accession>
<accession>Q6IBM9</accession>
<evidence type="ECO:0000250" key="1">
    <source>
        <dbReference type="UniProtKB" id="P14148"/>
    </source>
</evidence>
<evidence type="ECO:0000269" key="2">
    <source>
    </source>
</evidence>
<evidence type="ECO:0000269" key="3">
    <source>
    </source>
</evidence>
<evidence type="ECO:0000269" key="4">
    <source>
    </source>
</evidence>
<evidence type="ECO:0000269" key="5">
    <source>
    </source>
</evidence>
<evidence type="ECO:0000269" key="6">
    <source ref="7"/>
</evidence>
<evidence type="ECO:0000303" key="7">
    <source>
    </source>
</evidence>
<evidence type="ECO:0000305" key="8"/>
<evidence type="ECO:0000305" key="9">
    <source>
    </source>
</evidence>
<evidence type="ECO:0007744" key="10">
    <source>
        <dbReference type="PDB" id="6LQM"/>
    </source>
</evidence>
<evidence type="ECO:0007744" key="11">
    <source>
        <dbReference type="PDB" id="6LSR"/>
    </source>
</evidence>
<evidence type="ECO:0007744" key="12">
    <source>
        <dbReference type="PDB" id="6LSS"/>
    </source>
</evidence>
<evidence type="ECO:0007744" key="13">
    <source>
        <dbReference type="PDB" id="6LU8"/>
    </source>
</evidence>
<evidence type="ECO:0007744" key="14">
    <source>
    </source>
</evidence>
<evidence type="ECO:0007744" key="15">
    <source>
    </source>
</evidence>
<evidence type="ECO:0007744" key="16">
    <source>
    </source>
</evidence>
<evidence type="ECO:0007744" key="17">
    <source>
    </source>
</evidence>
<evidence type="ECO:0007744" key="18">
    <source>
    </source>
</evidence>
<keyword id="KW-0002">3D-structure</keyword>
<keyword id="KW-0007">Acetylation</keyword>
<keyword id="KW-0963">Cytoplasm</keyword>
<keyword id="KW-0903">Direct protein sequencing</keyword>
<keyword id="KW-0597">Phosphoprotein</keyword>
<keyword id="KW-1267">Proteomics identification</keyword>
<keyword id="KW-1185">Reference proteome</keyword>
<keyword id="KW-0677">Repeat</keyword>
<keyword id="KW-0687">Ribonucleoprotein</keyword>
<keyword id="KW-0689">Ribosomal protein</keyword>
<keyword id="KW-0694">RNA-binding</keyword>
<dbReference type="EMBL" id="X57958">
    <property type="protein sequence ID" value="CAA41026.1"/>
    <property type="status" value="ALT_INIT"/>
    <property type="molecule type" value="mRNA"/>
</dbReference>
<dbReference type="EMBL" id="X57959">
    <property type="protein sequence ID" value="CAA41027.1"/>
    <property type="molecule type" value="mRNA"/>
</dbReference>
<dbReference type="EMBL" id="L16558">
    <property type="protein sequence ID" value="AAA03081.1"/>
    <property type="molecule type" value="mRNA"/>
</dbReference>
<dbReference type="EMBL" id="X52967">
    <property type="protein sequence ID" value="CAA37139.1"/>
    <property type="molecule type" value="mRNA"/>
</dbReference>
<dbReference type="EMBL" id="CR456773">
    <property type="protein sequence ID" value="CAG33054.1"/>
    <property type="molecule type" value="mRNA"/>
</dbReference>
<dbReference type="EMBL" id="AK291119">
    <property type="protein sequence ID" value="BAF83808.1"/>
    <property type="molecule type" value="mRNA"/>
</dbReference>
<dbReference type="EMBL" id="AK313365">
    <property type="protein sequence ID" value="BAG36165.1"/>
    <property type="molecule type" value="mRNA"/>
</dbReference>
<dbReference type="EMBL" id="BC006095">
    <property type="protein sequence ID" value="AAH06095.1"/>
    <property type="molecule type" value="mRNA"/>
</dbReference>
<dbReference type="EMBL" id="BC008850">
    <property type="protein sequence ID" value="AAH08850.1"/>
    <property type="molecule type" value="mRNA"/>
</dbReference>
<dbReference type="EMBL" id="BC009599">
    <property type="protein sequence ID" value="AAH09599.1"/>
    <property type="molecule type" value="mRNA"/>
</dbReference>
<dbReference type="EMBL" id="BC071671">
    <property type="protein sequence ID" value="AAH71671.1"/>
    <property type="molecule type" value="mRNA"/>
</dbReference>
<dbReference type="EMBL" id="BC071894">
    <property type="protein sequence ID" value="AAH71894.1"/>
    <property type="molecule type" value="mRNA"/>
</dbReference>
<dbReference type="EMBL" id="BC071895">
    <property type="protein sequence ID" value="AAH71895.1"/>
    <property type="molecule type" value="mRNA"/>
</dbReference>
<dbReference type="EMBL" id="BC087837">
    <property type="protein sequence ID" value="AAH87837.1"/>
    <property type="molecule type" value="mRNA"/>
</dbReference>
<dbReference type="CCDS" id="CCDS6212.1"/>
<dbReference type="PIR" id="S11709">
    <property type="entry name" value="R5HU7"/>
</dbReference>
<dbReference type="RefSeq" id="NP_000962.2">
    <property type="nucleotide sequence ID" value="NM_000971.3"/>
</dbReference>
<dbReference type="PDB" id="4UG0">
    <property type="method" value="EM"/>
    <property type="chains" value="LF=1-248"/>
</dbReference>
<dbReference type="PDB" id="4V6X">
    <property type="method" value="EM"/>
    <property type="resolution" value="5.00 A"/>
    <property type="chains" value="CF=1-248"/>
</dbReference>
<dbReference type="PDB" id="5AJ0">
    <property type="method" value="EM"/>
    <property type="resolution" value="3.50 A"/>
    <property type="chains" value="AF=1-248"/>
</dbReference>
<dbReference type="PDB" id="5LKS">
    <property type="method" value="EM"/>
    <property type="resolution" value="3.60 A"/>
    <property type="chains" value="LF=1-248"/>
</dbReference>
<dbReference type="PDB" id="5T2C">
    <property type="method" value="EM"/>
    <property type="resolution" value="3.60 A"/>
    <property type="chains" value="m=1-248"/>
</dbReference>
<dbReference type="PDB" id="6IP5">
    <property type="method" value="EM"/>
    <property type="resolution" value="3.90 A"/>
    <property type="chains" value="2A=1-248"/>
</dbReference>
<dbReference type="PDB" id="6IP6">
    <property type="method" value="EM"/>
    <property type="resolution" value="4.50 A"/>
    <property type="chains" value="2A=1-248"/>
</dbReference>
<dbReference type="PDB" id="6IP8">
    <property type="method" value="EM"/>
    <property type="resolution" value="3.90 A"/>
    <property type="chains" value="2A=1-248"/>
</dbReference>
<dbReference type="PDB" id="6LQM">
    <property type="method" value="EM"/>
    <property type="resolution" value="3.09 A"/>
    <property type="chains" value="w=1-248"/>
</dbReference>
<dbReference type="PDB" id="6LSR">
    <property type="method" value="EM"/>
    <property type="resolution" value="3.13 A"/>
    <property type="chains" value="w=1-248"/>
</dbReference>
<dbReference type="PDB" id="6LSS">
    <property type="method" value="EM"/>
    <property type="resolution" value="3.23 A"/>
    <property type="chains" value="p=1-248"/>
</dbReference>
<dbReference type="PDB" id="6LU8">
    <property type="method" value="EM"/>
    <property type="resolution" value="3.13 A"/>
    <property type="chains" value="p=1-248"/>
</dbReference>
<dbReference type="PDB" id="6OLE">
    <property type="method" value="EM"/>
    <property type="resolution" value="3.10 A"/>
    <property type="chains" value="H=24-248"/>
</dbReference>
<dbReference type="PDB" id="6OLF">
    <property type="method" value="EM"/>
    <property type="resolution" value="3.90 A"/>
    <property type="chains" value="H=24-248"/>
</dbReference>
<dbReference type="PDB" id="6OLG">
    <property type="method" value="EM"/>
    <property type="resolution" value="3.40 A"/>
    <property type="chains" value="AF=15-248"/>
</dbReference>
<dbReference type="PDB" id="6OLI">
    <property type="method" value="EM"/>
    <property type="resolution" value="3.50 A"/>
    <property type="chains" value="H=24-248"/>
</dbReference>
<dbReference type="PDB" id="6OLZ">
    <property type="method" value="EM"/>
    <property type="resolution" value="3.90 A"/>
    <property type="chains" value="AF=15-248"/>
</dbReference>
<dbReference type="PDB" id="6OM0">
    <property type="method" value="EM"/>
    <property type="resolution" value="3.10 A"/>
    <property type="chains" value="H=24-248"/>
</dbReference>
<dbReference type="PDB" id="6OM7">
    <property type="method" value="EM"/>
    <property type="resolution" value="3.70 A"/>
    <property type="chains" value="H=24-248"/>
</dbReference>
<dbReference type="PDB" id="6QZP">
    <property type="method" value="EM"/>
    <property type="resolution" value="2.90 A"/>
    <property type="chains" value="LF=24-248"/>
</dbReference>
<dbReference type="PDB" id="6W6L">
    <property type="method" value="EM"/>
    <property type="resolution" value="3.84 A"/>
    <property type="chains" value="H=1-248"/>
</dbReference>
<dbReference type="PDB" id="6XA1">
    <property type="method" value="EM"/>
    <property type="resolution" value="2.80 A"/>
    <property type="chains" value="LF=24-248"/>
</dbReference>
<dbReference type="PDB" id="6Y0G">
    <property type="method" value="EM"/>
    <property type="resolution" value="3.20 A"/>
    <property type="chains" value="LF=1-248"/>
</dbReference>
<dbReference type="PDB" id="6Y2L">
    <property type="method" value="EM"/>
    <property type="resolution" value="3.00 A"/>
    <property type="chains" value="LF=1-248"/>
</dbReference>
<dbReference type="PDB" id="6Y57">
    <property type="method" value="EM"/>
    <property type="resolution" value="3.50 A"/>
    <property type="chains" value="LF=1-248"/>
</dbReference>
<dbReference type="PDB" id="6Y6X">
    <property type="method" value="EM"/>
    <property type="resolution" value="2.80 A"/>
    <property type="chains" value="LF=24-248"/>
</dbReference>
<dbReference type="PDB" id="6Z6L">
    <property type="method" value="EM"/>
    <property type="resolution" value="3.00 A"/>
    <property type="chains" value="LF=1-248"/>
</dbReference>
<dbReference type="PDB" id="6Z6M">
    <property type="method" value="EM"/>
    <property type="resolution" value="3.10 A"/>
    <property type="chains" value="LF=1-248"/>
</dbReference>
<dbReference type="PDB" id="6Z6N">
    <property type="method" value="EM"/>
    <property type="resolution" value="2.90 A"/>
    <property type="chains" value="LF=1-248"/>
</dbReference>
<dbReference type="PDB" id="6ZM7">
    <property type="method" value="EM"/>
    <property type="resolution" value="2.70 A"/>
    <property type="chains" value="LF=1-248"/>
</dbReference>
<dbReference type="PDB" id="6ZME">
    <property type="method" value="EM"/>
    <property type="resolution" value="3.00 A"/>
    <property type="chains" value="LF=1-248"/>
</dbReference>
<dbReference type="PDB" id="6ZMI">
    <property type="method" value="EM"/>
    <property type="resolution" value="2.60 A"/>
    <property type="chains" value="LF=1-248"/>
</dbReference>
<dbReference type="PDB" id="6ZMO">
    <property type="method" value="EM"/>
    <property type="resolution" value="3.10 A"/>
    <property type="chains" value="LF=1-248"/>
</dbReference>
<dbReference type="PDB" id="7BHP">
    <property type="method" value="EM"/>
    <property type="resolution" value="3.30 A"/>
    <property type="chains" value="LF=1-248"/>
</dbReference>
<dbReference type="PDB" id="7F5S">
    <property type="method" value="EM"/>
    <property type="resolution" value="2.72 A"/>
    <property type="chains" value="LF=1-248"/>
</dbReference>
<dbReference type="PDB" id="7OW7">
    <property type="method" value="EM"/>
    <property type="resolution" value="2.20 A"/>
    <property type="chains" value="m=1-248"/>
</dbReference>
<dbReference type="PDB" id="7QVP">
    <property type="method" value="EM"/>
    <property type="resolution" value="3.00 A"/>
    <property type="chains" value="LF/MF=1-248"/>
</dbReference>
<dbReference type="PDB" id="7XNX">
    <property type="method" value="EM"/>
    <property type="resolution" value="2.70 A"/>
    <property type="chains" value="LF=1-248"/>
</dbReference>
<dbReference type="PDB" id="7XNY">
    <property type="method" value="EM"/>
    <property type="resolution" value="2.50 A"/>
    <property type="chains" value="LF=1-248"/>
</dbReference>
<dbReference type="PDB" id="8A3D">
    <property type="method" value="EM"/>
    <property type="resolution" value="1.67 A"/>
    <property type="chains" value="m=1-248"/>
</dbReference>
<dbReference type="PDB" id="8FKP">
    <property type="method" value="EM"/>
    <property type="resolution" value="2.85 A"/>
    <property type="chains" value="SD=1-248"/>
</dbReference>
<dbReference type="PDB" id="8FKQ">
    <property type="method" value="EM"/>
    <property type="resolution" value="2.76 A"/>
    <property type="chains" value="SD=1-248"/>
</dbReference>
<dbReference type="PDB" id="8FKR">
    <property type="method" value="EM"/>
    <property type="resolution" value="2.89 A"/>
    <property type="chains" value="SD=1-248"/>
</dbReference>
<dbReference type="PDB" id="8FKS">
    <property type="method" value="EM"/>
    <property type="resolution" value="2.88 A"/>
    <property type="chains" value="SD=1-248"/>
</dbReference>
<dbReference type="PDB" id="8FKT">
    <property type="method" value="EM"/>
    <property type="resolution" value="2.81 A"/>
    <property type="chains" value="SD=1-248"/>
</dbReference>
<dbReference type="PDB" id="8FKU">
    <property type="method" value="EM"/>
    <property type="resolution" value="2.82 A"/>
    <property type="chains" value="SD=1-248"/>
</dbReference>
<dbReference type="PDB" id="8FKV">
    <property type="method" value="EM"/>
    <property type="resolution" value="2.47 A"/>
    <property type="chains" value="SD=1-248"/>
</dbReference>
<dbReference type="PDB" id="8FKW">
    <property type="method" value="EM"/>
    <property type="resolution" value="2.50 A"/>
    <property type="chains" value="SD=1-248"/>
</dbReference>
<dbReference type="PDB" id="8FKX">
    <property type="method" value="EM"/>
    <property type="resolution" value="2.59 A"/>
    <property type="chains" value="SD=1-248"/>
</dbReference>
<dbReference type="PDB" id="8FKY">
    <property type="method" value="EM"/>
    <property type="resolution" value="2.67 A"/>
    <property type="chains" value="SD=1-248"/>
</dbReference>
<dbReference type="PDB" id="8FKZ">
    <property type="method" value="EM"/>
    <property type="resolution" value="3.04 A"/>
    <property type="chains" value="SD=1-248"/>
</dbReference>
<dbReference type="PDB" id="8FL0">
    <property type="method" value="EM"/>
    <property type="resolution" value="2.91 A"/>
    <property type="chains" value="SD=1-248"/>
</dbReference>
<dbReference type="PDB" id="8FL2">
    <property type="method" value="EM"/>
    <property type="resolution" value="2.67 A"/>
    <property type="chains" value="SD=1-248"/>
</dbReference>
<dbReference type="PDB" id="8FL3">
    <property type="method" value="EM"/>
    <property type="resolution" value="2.53 A"/>
    <property type="chains" value="SD=1-248"/>
</dbReference>
<dbReference type="PDB" id="8FL4">
    <property type="method" value="EM"/>
    <property type="resolution" value="2.89 A"/>
    <property type="chains" value="SD=1-248"/>
</dbReference>
<dbReference type="PDB" id="8FL6">
    <property type="method" value="EM"/>
    <property type="resolution" value="2.62 A"/>
    <property type="chains" value="SD=1-248"/>
</dbReference>
<dbReference type="PDB" id="8FL7">
    <property type="method" value="EM"/>
    <property type="resolution" value="2.55 A"/>
    <property type="chains" value="SD=1-248"/>
</dbReference>
<dbReference type="PDB" id="8FL9">
    <property type="method" value="EM"/>
    <property type="resolution" value="2.75 A"/>
    <property type="chains" value="SD=1-248"/>
</dbReference>
<dbReference type="PDB" id="8FLA">
    <property type="method" value="EM"/>
    <property type="resolution" value="2.63 A"/>
    <property type="chains" value="SD=1-248"/>
</dbReference>
<dbReference type="PDB" id="8FLB">
    <property type="method" value="EM"/>
    <property type="resolution" value="2.55 A"/>
    <property type="chains" value="SD=1-248"/>
</dbReference>
<dbReference type="PDB" id="8FLC">
    <property type="method" value="EM"/>
    <property type="resolution" value="2.76 A"/>
    <property type="chains" value="SD=1-248"/>
</dbReference>
<dbReference type="PDB" id="8FLD">
    <property type="method" value="EM"/>
    <property type="resolution" value="2.58 A"/>
    <property type="chains" value="SD=1-248"/>
</dbReference>
<dbReference type="PDB" id="8FLE">
    <property type="method" value="EM"/>
    <property type="resolution" value="2.48 A"/>
    <property type="chains" value="SD=1-248"/>
</dbReference>
<dbReference type="PDB" id="8FLF">
    <property type="method" value="EM"/>
    <property type="resolution" value="2.65 A"/>
    <property type="chains" value="SD=1-248"/>
</dbReference>
<dbReference type="PDB" id="8G5Y">
    <property type="method" value="EM"/>
    <property type="resolution" value="2.29 A"/>
    <property type="chains" value="LF=1-248"/>
</dbReference>
<dbReference type="PDB" id="8G5Z">
    <property type="method" value="EM"/>
    <property type="resolution" value="2.64 A"/>
    <property type="chains" value="LF=24-248"/>
</dbReference>
<dbReference type="PDB" id="8G60">
    <property type="method" value="EM"/>
    <property type="resolution" value="2.54 A"/>
    <property type="chains" value="LF=1-248"/>
</dbReference>
<dbReference type="PDB" id="8G61">
    <property type="method" value="EM"/>
    <property type="resolution" value="2.94 A"/>
    <property type="chains" value="LF=1-248"/>
</dbReference>
<dbReference type="PDB" id="8G6J">
    <property type="method" value="EM"/>
    <property type="resolution" value="2.80 A"/>
    <property type="chains" value="LF=1-248"/>
</dbReference>
<dbReference type="PDB" id="8GLP">
    <property type="method" value="EM"/>
    <property type="resolution" value="1.67 A"/>
    <property type="chains" value="LF=1-248"/>
</dbReference>
<dbReference type="PDB" id="8IDT">
    <property type="method" value="EM"/>
    <property type="resolution" value="2.80 A"/>
    <property type="chains" value="p=1-248"/>
</dbReference>
<dbReference type="PDB" id="8IDY">
    <property type="method" value="EM"/>
    <property type="resolution" value="3.00 A"/>
    <property type="chains" value="p=1-248"/>
</dbReference>
<dbReference type="PDB" id="8IE3">
    <property type="method" value="EM"/>
    <property type="resolution" value="3.30 A"/>
    <property type="chains" value="p=1-248"/>
</dbReference>
<dbReference type="PDB" id="8IFD">
    <property type="method" value="EM"/>
    <property type="resolution" value="2.59 A"/>
    <property type="chains" value="2A=1-248"/>
</dbReference>
<dbReference type="PDB" id="8IFE">
    <property type="method" value="EM"/>
    <property type="resolution" value="2.57 A"/>
    <property type="chains" value="2A=1-248"/>
</dbReference>
<dbReference type="PDB" id="8INE">
    <property type="method" value="EM"/>
    <property type="resolution" value="3.20 A"/>
    <property type="chains" value="p=1-248"/>
</dbReference>
<dbReference type="PDB" id="8INF">
    <property type="method" value="EM"/>
    <property type="resolution" value="3.00 A"/>
    <property type="chains" value="p=1-248"/>
</dbReference>
<dbReference type="PDB" id="8INK">
    <property type="method" value="EM"/>
    <property type="resolution" value="3.20 A"/>
    <property type="chains" value="p=1-248"/>
</dbReference>
<dbReference type="PDB" id="8IPD">
    <property type="method" value="EM"/>
    <property type="resolution" value="3.20 A"/>
    <property type="chains" value="p=1-248"/>
</dbReference>
<dbReference type="PDB" id="8IPX">
    <property type="method" value="EM"/>
    <property type="resolution" value="4.30 A"/>
    <property type="chains" value="p=1-248"/>
</dbReference>
<dbReference type="PDB" id="8IPY">
    <property type="method" value="EM"/>
    <property type="resolution" value="3.20 A"/>
    <property type="chains" value="p=1-248"/>
</dbReference>
<dbReference type="PDB" id="8IR1">
    <property type="method" value="EM"/>
    <property type="resolution" value="3.30 A"/>
    <property type="chains" value="p=1-248"/>
</dbReference>
<dbReference type="PDB" id="8IR3">
    <property type="method" value="EM"/>
    <property type="resolution" value="3.50 A"/>
    <property type="chains" value="p=1-248"/>
</dbReference>
<dbReference type="PDB" id="8JDJ">
    <property type="method" value="EM"/>
    <property type="resolution" value="2.50 A"/>
    <property type="chains" value="L=1-248"/>
</dbReference>
<dbReference type="PDB" id="8JDK">
    <property type="method" value="EM"/>
    <property type="resolution" value="2.26 A"/>
    <property type="chains" value="L=1-248"/>
</dbReference>
<dbReference type="PDB" id="8JDL">
    <property type="method" value="EM"/>
    <property type="resolution" value="2.42 A"/>
    <property type="chains" value="L=1-248"/>
</dbReference>
<dbReference type="PDB" id="8JDM">
    <property type="method" value="EM"/>
    <property type="resolution" value="2.67 A"/>
    <property type="chains" value="L=1-248"/>
</dbReference>
<dbReference type="PDB" id="8K2C">
    <property type="method" value="EM"/>
    <property type="resolution" value="2.40 A"/>
    <property type="chains" value="LF=1-248"/>
</dbReference>
<dbReference type="PDB" id="8OHD">
    <property type="method" value="EM"/>
    <property type="resolution" value="3.10 A"/>
    <property type="chains" value="LF=1-248"/>
</dbReference>
<dbReference type="PDB" id="8OJ0">
    <property type="method" value="EM"/>
    <property type="resolution" value="3.30 A"/>
    <property type="chains" value="LF=1-248"/>
</dbReference>
<dbReference type="PDB" id="8OJ5">
    <property type="method" value="EM"/>
    <property type="resolution" value="2.90 A"/>
    <property type="chains" value="LF=1-248"/>
</dbReference>
<dbReference type="PDB" id="8OJ8">
    <property type="method" value="EM"/>
    <property type="resolution" value="3.30 A"/>
    <property type="chains" value="LF=1-248"/>
</dbReference>
<dbReference type="PDB" id="8QFD">
    <property type="method" value="EM"/>
    <property type="resolution" value="2.20 A"/>
    <property type="chains" value="F=1-248"/>
</dbReference>
<dbReference type="PDB" id="8QOI">
    <property type="method" value="EM"/>
    <property type="resolution" value="1.90 A"/>
    <property type="chains" value="LF=1-248"/>
</dbReference>
<dbReference type="PDB" id="8QYX">
    <property type="method" value="EM"/>
    <property type="resolution" value="1.78 A"/>
    <property type="chains" value="A1=1-248"/>
</dbReference>
<dbReference type="PDB" id="8RL2">
    <property type="method" value="EM"/>
    <property type="resolution" value="2.84 A"/>
    <property type="chains" value="LF=1-248"/>
</dbReference>
<dbReference type="PDB" id="8UKB">
    <property type="method" value="EM"/>
    <property type="resolution" value="3.05 A"/>
    <property type="chains" value="LF=24-248"/>
</dbReference>
<dbReference type="PDB" id="8XSX">
    <property type="method" value="EM"/>
    <property type="resolution" value="2.40 A"/>
    <property type="chains" value="LF=1-248"/>
</dbReference>
<dbReference type="PDB" id="8XSY">
    <property type="method" value="EM"/>
    <property type="resolution" value="3.00 A"/>
    <property type="chains" value="LF=1-248"/>
</dbReference>
<dbReference type="PDB" id="8XSZ">
    <property type="method" value="EM"/>
    <property type="resolution" value="3.20 A"/>
    <property type="chains" value="LF=1-248"/>
</dbReference>
<dbReference type="PDB" id="8Y0W">
    <property type="method" value="EM"/>
    <property type="resolution" value="3.40 A"/>
    <property type="chains" value="LF=1-248"/>
</dbReference>
<dbReference type="PDB" id="8Y0X">
    <property type="method" value="EM"/>
    <property type="resolution" value="3.30 A"/>
    <property type="chains" value="LF=1-248"/>
</dbReference>
<dbReference type="PDB" id="8YOO">
    <property type="method" value="EM"/>
    <property type="resolution" value="2.00 A"/>
    <property type="chains" value="LF=1-248"/>
</dbReference>
<dbReference type="PDB" id="8YOP">
    <property type="method" value="EM"/>
    <property type="resolution" value="2.20 A"/>
    <property type="chains" value="LF=1-248"/>
</dbReference>
<dbReference type="PDB" id="9C3H">
    <property type="method" value="EM"/>
    <property type="resolution" value="2.00 A"/>
    <property type="chains" value="LF=1-248"/>
</dbReference>
<dbReference type="PDB" id="9G8M">
    <property type="method" value="EM"/>
    <property type="resolution" value="3.30 A"/>
    <property type="chains" value="LF=1-248"/>
</dbReference>
<dbReference type="PDB" id="9GMO">
    <property type="method" value="EM"/>
    <property type="resolution" value="2.59 A"/>
    <property type="chains" value="m=1-248"/>
</dbReference>
<dbReference type="PDBsum" id="4UG0"/>
<dbReference type="PDBsum" id="4V6X"/>
<dbReference type="PDBsum" id="5AJ0"/>
<dbReference type="PDBsum" id="5LKS"/>
<dbReference type="PDBsum" id="5T2C"/>
<dbReference type="PDBsum" id="6IP5"/>
<dbReference type="PDBsum" id="6IP6"/>
<dbReference type="PDBsum" id="6IP8"/>
<dbReference type="PDBsum" id="6LQM"/>
<dbReference type="PDBsum" id="6LSR"/>
<dbReference type="PDBsum" id="6LSS"/>
<dbReference type="PDBsum" id="6LU8"/>
<dbReference type="PDBsum" id="6OLE"/>
<dbReference type="PDBsum" id="6OLF"/>
<dbReference type="PDBsum" id="6OLG"/>
<dbReference type="PDBsum" id="6OLI"/>
<dbReference type="PDBsum" id="6OLZ"/>
<dbReference type="PDBsum" id="6OM0"/>
<dbReference type="PDBsum" id="6OM7"/>
<dbReference type="PDBsum" id="6QZP"/>
<dbReference type="PDBsum" id="6W6L"/>
<dbReference type="PDBsum" id="6XA1"/>
<dbReference type="PDBsum" id="6Y0G"/>
<dbReference type="PDBsum" id="6Y2L"/>
<dbReference type="PDBsum" id="6Y57"/>
<dbReference type="PDBsum" id="6Y6X"/>
<dbReference type="PDBsum" id="6Z6L"/>
<dbReference type="PDBsum" id="6Z6M"/>
<dbReference type="PDBsum" id="6Z6N"/>
<dbReference type="PDBsum" id="6ZM7"/>
<dbReference type="PDBsum" id="6ZME"/>
<dbReference type="PDBsum" id="6ZMI"/>
<dbReference type="PDBsum" id="6ZMO"/>
<dbReference type="PDBsum" id="7BHP"/>
<dbReference type="PDBsum" id="7F5S"/>
<dbReference type="PDBsum" id="7OW7"/>
<dbReference type="PDBsum" id="7QVP"/>
<dbReference type="PDBsum" id="7XNX"/>
<dbReference type="PDBsum" id="7XNY"/>
<dbReference type="PDBsum" id="8A3D"/>
<dbReference type="PDBsum" id="8FKP"/>
<dbReference type="PDBsum" id="8FKQ"/>
<dbReference type="PDBsum" id="8FKR"/>
<dbReference type="PDBsum" id="8FKS"/>
<dbReference type="PDBsum" id="8FKT"/>
<dbReference type="PDBsum" id="8FKU"/>
<dbReference type="PDBsum" id="8FKV"/>
<dbReference type="PDBsum" id="8FKW"/>
<dbReference type="PDBsum" id="8FKX"/>
<dbReference type="PDBsum" id="8FKY"/>
<dbReference type="PDBsum" id="8FKZ"/>
<dbReference type="PDBsum" id="8FL0"/>
<dbReference type="PDBsum" id="8FL2"/>
<dbReference type="PDBsum" id="8FL3"/>
<dbReference type="PDBsum" id="8FL4"/>
<dbReference type="PDBsum" id="8FL6"/>
<dbReference type="PDBsum" id="8FL7"/>
<dbReference type="PDBsum" id="8FL9"/>
<dbReference type="PDBsum" id="8FLA"/>
<dbReference type="PDBsum" id="8FLB"/>
<dbReference type="PDBsum" id="8FLC"/>
<dbReference type="PDBsum" id="8FLD"/>
<dbReference type="PDBsum" id="8FLE"/>
<dbReference type="PDBsum" id="8FLF"/>
<dbReference type="PDBsum" id="8G5Y"/>
<dbReference type="PDBsum" id="8G5Z"/>
<dbReference type="PDBsum" id="8G60"/>
<dbReference type="PDBsum" id="8G61"/>
<dbReference type="PDBsum" id="8G6J"/>
<dbReference type="PDBsum" id="8GLP"/>
<dbReference type="PDBsum" id="8IDT"/>
<dbReference type="PDBsum" id="8IDY"/>
<dbReference type="PDBsum" id="8IE3"/>
<dbReference type="PDBsum" id="8IFD"/>
<dbReference type="PDBsum" id="8IFE"/>
<dbReference type="PDBsum" id="8INE"/>
<dbReference type="PDBsum" id="8INF"/>
<dbReference type="PDBsum" id="8INK"/>
<dbReference type="PDBsum" id="8IPD"/>
<dbReference type="PDBsum" id="8IPX"/>
<dbReference type="PDBsum" id="8IPY"/>
<dbReference type="PDBsum" id="8IR1"/>
<dbReference type="PDBsum" id="8IR3"/>
<dbReference type="PDBsum" id="8JDJ"/>
<dbReference type="PDBsum" id="8JDK"/>
<dbReference type="PDBsum" id="8JDL"/>
<dbReference type="PDBsum" id="8JDM"/>
<dbReference type="PDBsum" id="8K2C"/>
<dbReference type="PDBsum" id="8OHD"/>
<dbReference type="PDBsum" id="8OJ0"/>
<dbReference type="PDBsum" id="8OJ5"/>
<dbReference type="PDBsum" id="8OJ8"/>
<dbReference type="PDBsum" id="8QFD"/>
<dbReference type="PDBsum" id="8QOI"/>
<dbReference type="PDBsum" id="8QYX"/>
<dbReference type="PDBsum" id="8RL2"/>
<dbReference type="PDBsum" id="8UKB"/>
<dbReference type="PDBsum" id="8XSX"/>
<dbReference type="PDBsum" id="8XSY"/>
<dbReference type="PDBsum" id="8XSZ"/>
<dbReference type="PDBsum" id="8Y0W"/>
<dbReference type="PDBsum" id="8Y0X"/>
<dbReference type="PDBsum" id="8YOO"/>
<dbReference type="PDBsum" id="8YOP"/>
<dbReference type="PDBsum" id="9C3H"/>
<dbReference type="PDBsum" id="9G8M"/>
<dbReference type="PDBsum" id="9GMO"/>
<dbReference type="EMDB" id="EMD-0948"/>
<dbReference type="EMDB" id="EMD-0963"/>
<dbReference type="EMDB" id="EMD-0964"/>
<dbReference type="EMDB" id="EMD-0978"/>
<dbReference type="EMDB" id="EMD-10668"/>
<dbReference type="EMDB" id="EMD-10674"/>
<dbReference type="EMDB" id="EMD-10690"/>
<dbReference type="EMDB" id="EMD-10709"/>
<dbReference type="EMDB" id="EMD-11098"/>
<dbReference type="EMDB" id="EMD-11099"/>
<dbReference type="EMDB" id="EMD-11100"/>
<dbReference type="EMDB" id="EMD-11288"/>
<dbReference type="EMDB" id="EMD-11289"/>
<dbReference type="EMDB" id="EMD-11292"/>
<dbReference type="EMDB" id="EMD-11299"/>
<dbReference type="EMDB" id="EMD-12189"/>
<dbReference type="EMDB" id="EMD-13094"/>
<dbReference type="EMDB" id="EMD-14181"/>
<dbReference type="EMDB" id="EMD-15113"/>
<dbReference type="EMDB" id="EMD-16880"/>
<dbReference type="EMDB" id="EMD-16902"/>
<dbReference type="EMDB" id="EMD-16905"/>
<dbReference type="EMDB" id="EMD-16908"/>
<dbReference type="EMDB" id="EMD-18382"/>
<dbReference type="EMDB" id="EMD-18539"/>
<dbReference type="EMDB" id="EMD-18765"/>
<dbReference type="EMDB" id="EMD-19330"/>
<dbReference type="EMDB" id="EMD-29252"/>
<dbReference type="EMDB" id="EMD-29253"/>
<dbReference type="EMDB" id="EMD-29254"/>
<dbReference type="EMDB" id="EMD-29255"/>
<dbReference type="EMDB" id="EMD-29256"/>
<dbReference type="EMDB" id="EMD-29257"/>
<dbReference type="EMDB" id="EMD-29258"/>
<dbReference type="EMDB" id="EMD-29259"/>
<dbReference type="EMDB" id="EMD-29260"/>
<dbReference type="EMDB" id="EMD-29261"/>
<dbReference type="EMDB" id="EMD-29262"/>
<dbReference type="EMDB" id="EMD-29263"/>
<dbReference type="EMDB" id="EMD-29265"/>
<dbReference type="EMDB" id="EMD-29266"/>
<dbReference type="EMDB" id="EMD-29267"/>
<dbReference type="EMDB" id="EMD-29268"/>
<dbReference type="EMDB" id="EMD-29269"/>
<dbReference type="EMDB" id="EMD-29271"/>
<dbReference type="EMDB" id="EMD-29272"/>
<dbReference type="EMDB" id="EMD-29273"/>
<dbReference type="EMDB" id="EMD-29274"/>
<dbReference type="EMDB" id="EMD-29275"/>
<dbReference type="EMDB" id="EMD-29276"/>
<dbReference type="EMDB" id="EMD-29277"/>
<dbReference type="EMDB" id="EMD-29757"/>
<dbReference type="EMDB" id="EMD-29758"/>
<dbReference type="EMDB" id="EMD-29759"/>
<dbReference type="EMDB" id="EMD-29760"/>
<dbReference type="EMDB" id="EMD-29771"/>
<dbReference type="EMDB" id="EMD-31465"/>
<dbReference type="EMDB" id="EMD-33329"/>
<dbReference type="EMDB" id="EMD-33330"/>
<dbReference type="EMDB" id="EMD-35370"/>
<dbReference type="EMDB" id="EMD-35371"/>
<dbReference type="EMDB" id="EMD-35375"/>
<dbReference type="EMDB" id="EMD-35413"/>
<dbReference type="EMDB" id="EMD-35414"/>
<dbReference type="EMDB" id="EMD-35596"/>
<dbReference type="EMDB" id="EMD-35597"/>
<dbReference type="EMDB" id="EMD-35599"/>
<dbReference type="EMDB" id="EMD-35639"/>
<dbReference type="EMDB" id="EMD-35649"/>
<dbReference type="EMDB" id="EMD-35651"/>
<dbReference type="EMDB" id="EMD-35672"/>
<dbReference type="EMDB" id="EMD-35673"/>
<dbReference type="EMDB" id="EMD-36178"/>
<dbReference type="EMDB" id="EMD-36179"/>
<dbReference type="EMDB" id="EMD-36180"/>
<dbReference type="EMDB" id="EMD-36181"/>
<dbReference type="EMDB" id="EMD-36838"/>
<dbReference type="EMDB" id="EMD-38629"/>
<dbReference type="EMDB" id="EMD-38630"/>
<dbReference type="EMDB" id="EMD-38631"/>
<dbReference type="EMDB" id="EMD-3883"/>
<dbReference type="EMDB" id="EMD-39455"/>
<dbReference type="EMDB" id="EMD-39456"/>
<dbReference type="EMDB" id="EMD-40205"/>
<dbReference type="EMDB" id="EMD-4070"/>
<dbReference type="EMDB" id="EMD-42351"/>
<dbReference type="EMDB" id="EMD-45170"/>
<dbReference type="EMDB" id="EMD-51132"/>
<dbReference type="EMDB" id="EMD-51452"/>
<dbReference type="EMDB" id="EMD-9701"/>
<dbReference type="EMDB" id="EMD-9702"/>
<dbReference type="EMDB" id="EMD-9703"/>
<dbReference type="SMR" id="P18124"/>
<dbReference type="BioGRID" id="112049">
    <property type="interactions" value="506"/>
</dbReference>
<dbReference type="ComplexPortal" id="CPX-5183">
    <property type="entry name" value="60S cytosolic large ribosomal subunit"/>
</dbReference>
<dbReference type="ComplexPortal" id="CPX-7664">
    <property type="entry name" value="60S cytosolic large ribosomal subunit, testis-specific variant"/>
</dbReference>
<dbReference type="ComplexPortal" id="CPX-7665">
    <property type="entry name" value="60S cytosolic large ribosomal subunit, striated muscle variant"/>
</dbReference>
<dbReference type="CORUM" id="P18124"/>
<dbReference type="FunCoup" id="P18124">
    <property type="interactions" value="1962"/>
</dbReference>
<dbReference type="IntAct" id="P18124">
    <property type="interactions" value="195"/>
</dbReference>
<dbReference type="MINT" id="P18124"/>
<dbReference type="STRING" id="9606.ENSP00000339795"/>
<dbReference type="GlyGen" id="P18124">
    <property type="glycosylation" value="1 site, 1 O-linked glycan (1 site)"/>
</dbReference>
<dbReference type="iPTMnet" id="P18124"/>
<dbReference type="MetOSite" id="P18124"/>
<dbReference type="PhosphoSitePlus" id="P18124"/>
<dbReference type="SwissPalm" id="P18124"/>
<dbReference type="BioMuta" id="RPL7"/>
<dbReference type="DMDM" id="133021"/>
<dbReference type="jPOST" id="P18124"/>
<dbReference type="MassIVE" id="P18124"/>
<dbReference type="PaxDb" id="9606-ENSP00000339795"/>
<dbReference type="PeptideAtlas" id="P18124"/>
<dbReference type="PRIDE" id="P18124"/>
<dbReference type="ProteomicsDB" id="53549"/>
<dbReference type="Pumba" id="P18124"/>
<dbReference type="TopDownProteomics" id="P18124"/>
<dbReference type="Antibodypedia" id="25169">
    <property type="antibodies" value="257 antibodies from 30 providers"/>
</dbReference>
<dbReference type="DNASU" id="6129"/>
<dbReference type="Ensembl" id="ENST00000352983.7">
    <property type="protein sequence ID" value="ENSP00000339795.2"/>
    <property type="gene ID" value="ENSG00000147604.14"/>
</dbReference>
<dbReference type="GeneID" id="6129"/>
<dbReference type="KEGG" id="hsa:6129"/>
<dbReference type="MANE-Select" id="ENST00000352983.7">
    <property type="protein sequence ID" value="ENSP00000339795.2"/>
    <property type="RefSeq nucleotide sequence ID" value="NM_000971.4"/>
    <property type="RefSeq protein sequence ID" value="NP_000962.2"/>
</dbReference>
<dbReference type="UCSC" id="uc003xzg.4">
    <property type="organism name" value="human"/>
</dbReference>
<dbReference type="AGR" id="HGNC:10363"/>
<dbReference type="CTD" id="6129"/>
<dbReference type="DisGeNET" id="6129"/>
<dbReference type="GeneCards" id="RPL7"/>
<dbReference type="HGNC" id="HGNC:10363">
    <property type="gene designation" value="RPL7"/>
</dbReference>
<dbReference type="HPA" id="ENSG00000147604">
    <property type="expression patterns" value="Low tissue specificity"/>
</dbReference>
<dbReference type="MIM" id="604166">
    <property type="type" value="gene"/>
</dbReference>
<dbReference type="neXtProt" id="NX_P18124"/>
<dbReference type="OpenTargets" id="ENSG00000147604"/>
<dbReference type="PharmGKB" id="PA34759"/>
<dbReference type="VEuPathDB" id="HostDB:ENSG00000147604"/>
<dbReference type="eggNOG" id="KOG3184">
    <property type="taxonomic scope" value="Eukaryota"/>
</dbReference>
<dbReference type="GeneTree" id="ENSGT00950000182878"/>
<dbReference type="InParanoid" id="P18124"/>
<dbReference type="OMA" id="IVEPWIA"/>
<dbReference type="OrthoDB" id="9527569at2759"/>
<dbReference type="PAN-GO" id="P18124">
    <property type="GO annotations" value="4 GO annotations based on evolutionary models"/>
</dbReference>
<dbReference type="PhylomeDB" id="P18124"/>
<dbReference type="TreeFam" id="TF300740"/>
<dbReference type="PathwayCommons" id="P18124"/>
<dbReference type="Reactome" id="R-HSA-156827">
    <property type="pathway name" value="L13a-mediated translational silencing of Ceruloplasmin expression"/>
</dbReference>
<dbReference type="Reactome" id="R-HSA-156902">
    <property type="pathway name" value="Peptide chain elongation"/>
</dbReference>
<dbReference type="Reactome" id="R-HSA-1799339">
    <property type="pathway name" value="SRP-dependent cotranslational protein targeting to membrane"/>
</dbReference>
<dbReference type="Reactome" id="R-HSA-192823">
    <property type="pathway name" value="Viral mRNA Translation"/>
</dbReference>
<dbReference type="Reactome" id="R-HSA-2408557">
    <property type="pathway name" value="Selenocysteine synthesis"/>
</dbReference>
<dbReference type="Reactome" id="R-HSA-6791226">
    <property type="pathway name" value="Major pathway of rRNA processing in the nucleolus and cytosol"/>
</dbReference>
<dbReference type="Reactome" id="R-HSA-72689">
    <property type="pathway name" value="Formation of a pool of free 40S subunits"/>
</dbReference>
<dbReference type="Reactome" id="R-HSA-72706">
    <property type="pathway name" value="GTP hydrolysis and joining of the 60S ribosomal subunit"/>
</dbReference>
<dbReference type="Reactome" id="R-HSA-72764">
    <property type="pathway name" value="Eukaryotic Translation Termination"/>
</dbReference>
<dbReference type="Reactome" id="R-HSA-9010553">
    <property type="pathway name" value="Regulation of expression of SLITs and ROBOs"/>
</dbReference>
<dbReference type="Reactome" id="R-HSA-9633012">
    <property type="pathway name" value="Response of EIF2AK4 (GCN2) to amino acid deficiency"/>
</dbReference>
<dbReference type="Reactome" id="R-HSA-975956">
    <property type="pathway name" value="Nonsense Mediated Decay (NMD) independent of the Exon Junction Complex (EJC)"/>
</dbReference>
<dbReference type="Reactome" id="R-HSA-975957">
    <property type="pathway name" value="Nonsense Mediated Decay (NMD) enhanced by the Exon Junction Complex (EJC)"/>
</dbReference>
<dbReference type="SignaLink" id="P18124"/>
<dbReference type="SIGNOR" id="P18124"/>
<dbReference type="BioGRID-ORCS" id="6129">
    <property type="hits" value="839 hits in 1137 CRISPR screens"/>
</dbReference>
<dbReference type="CD-CODE" id="232F8A39">
    <property type="entry name" value="P-body"/>
</dbReference>
<dbReference type="CD-CODE" id="91857CE7">
    <property type="entry name" value="Nucleolus"/>
</dbReference>
<dbReference type="ChiTaRS" id="RPL7">
    <property type="organism name" value="human"/>
</dbReference>
<dbReference type="GeneWiki" id="RPL7"/>
<dbReference type="GenomeRNAi" id="6129"/>
<dbReference type="Pharos" id="P18124">
    <property type="development level" value="Tbio"/>
</dbReference>
<dbReference type="PRO" id="PR:P18124"/>
<dbReference type="Proteomes" id="UP000005640">
    <property type="component" value="Chromosome 8"/>
</dbReference>
<dbReference type="RNAct" id="P18124">
    <property type="molecule type" value="protein"/>
</dbReference>
<dbReference type="Bgee" id="ENSG00000147604">
    <property type="expression patterns" value="Expressed in ganglionic eminence and 159 other cell types or tissues"/>
</dbReference>
<dbReference type="ExpressionAtlas" id="P18124">
    <property type="expression patterns" value="baseline and differential"/>
</dbReference>
<dbReference type="GO" id="GO:0005737">
    <property type="term" value="C:cytoplasm"/>
    <property type="evidence" value="ECO:0007005"/>
    <property type="project" value="UniProtKB"/>
</dbReference>
<dbReference type="GO" id="GO:0005829">
    <property type="term" value="C:cytosol"/>
    <property type="evidence" value="ECO:0000314"/>
    <property type="project" value="HPA"/>
</dbReference>
<dbReference type="GO" id="GO:0022625">
    <property type="term" value="C:cytosolic large ribosomal subunit"/>
    <property type="evidence" value="ECO:0000314"/>
    <property type="project" value="UniProtKB"/>
</dbReference>
<dbReference type="GO" id="GO:0022626">
    <property type="term" value="C:cytosolic ribosome"/>
    <property type="evidence" value="ECO:0000314"/>
    <property type="project" value="FlyBase"/>
</dbReference>
<dbReference type="GO" id="GO:0005783">
    <property type="term" value="C:endoplasmic reticulum"/>
    <property type="evidence" value="ECO:0000314"/>
    <property type="project" value="HPA"/>
</dbReference>
<dbReference type="GO" id="GO:0005925">
    <property type="term" value="C:focal adhesion"/>
    <property type="evidence" value="ECO:0007005"/>
    <property type="project" value="UniProtKB"/>
</dbReference>
<dbReference type="GO" id="GO:0016020">
    <property type="term" value="C:membrane"/>
    <property type="evidence" value="ECO:0007005"/>
    <property type="project" value="UniProtKB"/>
</dbReference>
<dbReference type="GO" id="GO:0005730">
    <property type="term" value="C:nucleolus"/>
    <property type="evidence" value="ECO:0000314"/>
    <property type="project" value="HPA"/>
</dbReference>
<dbReference type="GO" id="GO:0005634">
    <property type="term" value="C:nucleus"/>
    <property type="evidence" value="ECO:0007005"/>
    <property type="project" value="UniProtKB"/>
</dbReference>
<dbReference type="GO" id="GO:0014069">
    <property type="term" value="C:postsynaptic density"/>
    <property type="evidence" value="ECO:0000314"/>
    <property type="project" value="SynGO"/>
</dbReference>
<dbReference type="GO" id="GO:1990904">
    <property type="term" value="C:ribonucleoprotein complex"/>
    <property type="evidence" value="ECO:0000314"/>
    <property type="project" value="MGI"/>
</dbReference>
<dbReference type="GO" id="GO:0003677">
    <property type="term" value="F:DNA binding"/>
    <property type="evidence" value="ECO:0000314"/>
    <property type="project" value="MGI"/>
</dbReference>
<dbReference type="GO" id="GO:0042802">
    <property type="term" value="F:identical protein binding"/>
    <property type="evidence" value="ECO:0000353"/>
    <property type="project" value="MGI"/>
</dbReference>
<dbReference type="GO" id="GO:0003729">
    <property type="term" value="F:mRNA binding"/>
    <property type="evidence" value="ECO:0000314"/>
    <property type="project" value="MGI"/>
</dbReference>
<dbReference type="GO" id="GO:0003723">
    <property type="term" value="F:RNA binding"/>
    <property type="evidence" value="ECO:0007005"/>
    <property type="project" value="UniProtKB"/>
</dbReference>
<dbReference type="GO" id="GO:0003735">
    <property type="term" value="F:structural constituent of ribosome"/>
    <property type="evidence" value="ECO:0000314"/>
    <property type="project" value="UniProtKB"/>
</dbReference>
<dbReference type="GO" id="GO:0002181">
    <property type="term" value="P:cytoplasmic translation"/>
    <property type="evidence" value="ECO:0000303"/>
    <property type="project" value="ComplexPortal"/>
</dbReference>
<dbReference type="GO" id="GO:0000463">
    <property type="term" value="P:maturation of LSU-rRNA from tricistronic rRNA transcript (SSU-rRNA, 5.8S rRNA, LSU-rRNA)"/>
    <property type="evidence" value="ECO:0000318"/>
    <property type="project" value="GO_Central"/>
</dbReference>
<dbReference type="GO" id="GO:0042273">
    <property type="term" value="P:ribosomal large subunit biogenesis"/>
    <property type="evidence" value="ECO:0000315"/>
    <property type="project" value="UniProtKB"/>
</dbReference>
<dbReference type="GO" id="GO:0006364">
    <property type="term" value="P:rRNA processing"/>
    <property type="evidence" value="ECO:0000315"/>
    <property type="project" value="UniProtKB"/>
</dbReference>
<dbReference type="GO" id="GO:0006412">
    <property type="term" value="P:translation"/>
    <property type="evidence" value="ECO:0000304"/>
    <property type="project" value="ProtInc"/>
</dbReference>
<dbReference type="CDD" id="cd01657">
    <property type="entry name" value="Ribosomal_L7_archeal_euk"/>
    <property type="match status" value="1"/>
</dbReference>
<dbReference type="FunFam" id="3.30.1390.20:FF:000002">
    <property type="entry name" value="60S ribosomal protein L7"/>
    <property type="match status" value="1"/>
</dbReference>
<dbReference type="FunFam" id="3.30.1390.20:FF:000003">
    <property type="entry name" value="60S ribosomal protein L7"/>
    <property type="match status" value="1"/>
</dbReference>
<dbReference type="Gene3D" id="3.30.1390.20">
    <property type="entry name" value="Ribosomal protein L30, ferredoxin-like fold domain"/>
    <property type="match status" value="2"/>
</dbReference>
<dbReference type="InterPro" id="IPR036919">
    <property type="entry name" value="Ribo_uL30_ferredoxin-like_sf"/>
</dbReference>
<dbReference type="InterPro" id="IPR039699">
    <property type="entry name" value="Ribosomal_uL30"/>
</dbReference>
<dbReference type="InterPro" id="IPR018038">
    <property type="entry name" value="Ribosomal_uL30_CS"/>
</dbReference>
<dbReference type="InterPro" id="IPR005998">
    <property type="entry name" value="Ribosomal_uL30_euk"/>
</dbReference>
<dbReference type="InterPro" id="IPR035808">
    <property type="entry name" value="Ribosomal_uL30_euk_arc"/>
</dbReference>
<dbReference type="InterPro" id="IPR016082">
    <property type="entry name" value="Ribosomal_uL30_ferredoxin-like"/>
</dbReference>
<dbReference type="InterPro" id="IPR012988">
    <property type="entry name" value="Ribosomal_uL30_N_euk"/>
</dbReference>
<dbReference type="NCBIfam" id="TIGR01310">
    <property type="entry name" value="uL30_euk"/>
    <property type="match status" value="1"/>
</dbReference>
<dbReference type="PANTHER" id="PTHR11524">
    <property type="entry name" value="60S RIBOSOMAL PROTEIN L7"/>
    <property type="match status" value="1"/>
</dbReference>
<dbReference type="PANTHER" id="PTHR11524:SF12">
    <property type="entry name" value="LARGE RIBOSOMAL SUBUNIT PROTEIN UL30"/>
    <property type="match status" value="1"/>
</dbReference>
<dbReference type="Pfam" id="PF00327">
    <property type="entry name" value="Ribosomal_L30"/>
    <property type="match status" value="1"/>
</dbReference>
<dbReference type="Pfam" id="PF08079">
    <property type="entry name" value="Ribosomal_L30_N"/>
    <property type="match status" value="1"/>
</dbReference>
<dbReference type="SUPFAM" id="SSF55129">
    <property type="entry name" value="Ribosomal protein L30p/L7e"/>
    <property type="match status" value="1"/>
</dbReference>
<dbReference type="PROSITE" id="PS00634">
    <property type="entry name" value="RIBOSOMAL_L30"/>
    <property type="match status" value="1"/>
</dbReference>
<reference key="1">
    <citation type="journal article" date="1993" name="Nucleic Acids Res.">
        <title>Structural and functional properties of ribosomal protein L7 from humans and rodents.</title>
        <authorList>
            <person name="Hemmerich P."/>
            <person name="von Mikecz A."/>
            <person name="Neumann F."/>
            <person name="Soezen O."/>
            <person name="Wolff-Vorbeck G."/>
            <person name="Zoebelein R."/>
            <person name="Krawinkel U."/>
        </authorList>
    </citation>
    <scope>NUCLEOTIDE SEQUENCE [MRNA]</scope>
    <scope>CHARACTERIZATION</scope>
</reference>
<reference key="2">
    <citation type="journal article" date="1993" name="J. Biol. Chem.">
        <title>Identification of a transcript that is down-regulated in senescent human fibroblasts. Cloning, sequence analysis, and regulation of the human L7 ribosomal protein gene.</title>
        <authorList>
            <person name="Seshadri T."/>
            <person name="Uzman J.A."/>
            <person name="Oshima J."/>
            <person name="Campisi J."/>
        </authorList>
    </citation>
    <scope>NUCLEOTIDE SEQUENCE [MRNA]</scope>
    <source>
        <tissue>Fibroblast</tissue>
    </source>
</reference>
<reference key="3">
    <citation type="submission" date="1990-05" db="EMBL/GenBank/DDBJ databases">
        <authorList>
            <person name="Schneider R."/>
            <person name="Herzog H."/>
            <person name="Hfferer L."/>
            <person name="Schweiger M."/>
        </authorList>
    </citation>
    <scope>NUCLEOTIDE SEQUENCE [MRNA]</scope>
</reference>
<reference key="4">
    <citation type="submission" date="2004-06" db="EMBL/GenBank/DDBJ databases">
        <title>Cloning of human full open reading frames in Gateway(TM) system entry vector (pDONR201).</title>
        <authorList>
            <person name="Ebert L."/>
            <person name="Schick M."/>
            <person name="Neubert P."/>
            <person name="Schatten R."/>
            <person name="Henze S."/>
            <person name="Korn B."/>
        </authorList>
    </citation>
    <scope>NUCLEOTIDE SEQUENCE [LARGE SCALE MRNA]</scope>
</reference>
<reference key="5">
    <citation type="journal article" date="2004" name="Nat. Genet.">
        <title>Complete sequencing and characterization of 21,243 full-length human cDNAs.</title>
        <authorList>
            <person name="Ota T."/>
            <person name="Suzuki Y."/>
            <person name="Nishikawa T."/>
            <person name="Otsuki T."/>
            <person name="Sugiyama T."/>
            <person name="Irie R."/>
            <person name="Wakamatsu A."/>
            <person name="Hayashi K."/>
            <person name="Sato H."/>
            <person name="Nagai K."/>
            <person name="Kimura K."/>
            <person name="Makita H."/>
            <person name="Sekine M."/>
            <person name="Obayashi M."/>
            <person name="Nishi T."/>
            <person name="Shibahara T."/>
            <person name="Tanaka T."/>
            <person name="Ishii S."/>
            <person name="Yamamoto J."/>
            <person name="Saito K."/>
            <person name="Kawai Y."/>
            <person name="Isono Y."/>
            <person name="Nakamura Y."/>
            <person name="Nagahari K."/>
            <person name="Murakami K."/>
            <person name="Yasuda T."/>
            <person name="Iwayanagi T."/>
            <person name="Wagatsuma M."/>
            <person name="Shiratori A."/>
            <person name="Sudo H."/>
            <person name="Hosoiri T."/>
            <person name="Kaku Y."/>
            <person name="Kodaira H."/>
            <person name="Kondo H."/>
            <person name="Sugawara M."/>
            <person name="Takahashi M."/>
            <person name="Kanda K."/>
            <person name="Yokoi T."/>
            <person name="Furuya T."/>
            <person name="Kikkawa E."/>
            <person name="Omura Y."/>
            <person name="Abe K."/>
            <person name="Kamihara K."/>
            <person name="Katsuta N."/>
            <person name="Sato K."/>
            <person name="Tanikawa M."/>
            <person name="Yamazaki M."/>
            <person name="Ninomiya K."/>
            <person name="Ishibashi T."/>
            <person name="Yamashita H."/>
            <person name="Murakawa K."/>
            <person name="Fujimori K."/>
            <person name="Tanai H."/>
            <person name="Kimata M."/>
            <person name="Watanabe M."/>
            <person name="Hiraoka S."/>
            <person name="Chiba Y."/>
            <person name="Ishida S."/>
            <person name="Ono Y."/>
            <person name="Takiguchi S."/>
            <person name="Watanabe S."/>
            <person name="Yosida M."/>
            <person name="Hotuta T."/>
            <person name="Kusano J."/>
            <person name="Kanehori K."/>
            <person name="Takahashi-Fujii A."/>
            <person name="Hara H."/>
            <person name="Tanase T.-O."/>
            <person name="Nomura Y."/>
            <person name="Togiya S."/>
            <person name="Komai F."/>
            <person name="Hara R."/>
            <person name="Takeuchi K."/>
            <person name="Arita M."/>
            <person name="Imose N."/>
            <person name="Musashino K."/>
            <person name="Yuuki H."/>
            <person name="Oshima A."/>
            <person name="Sasaki N."/>
            <person name="Aotsuka S."/>
            <person name="Yoshikawa Y."/>
            <person name="Matsunawa H."/>
            <person name="Ichihara T."/>
            <person name="Shiohata N."/>
            <person name="Sano S."/>
            <person name="Moriya S."/>
            <person name="Momiyama H."/>
            <person name="Satoh N."/>
            <person name="Takami S."/>
            <person name="Terashima Y."/>
            <person name="Suzuki O."/>
            <person name="Nakagawa S."/>
            <person name="Senoh A."/>
            <person name="Mizoguchi H."/>
            <person name="Goto Y."/>
            <person name="Shimizu F."/>
            <person name="Wakebe H."/>
            <person name="Hishigaki H."/>
            <person name="Watanabe T."/>
            <person name="Sugiyama A."/>
            <person name="Takemoto M."/>
            <person name="Kawakami B."/>
            <person name="Yamazaki M."/>
            <person name="Watanabe K."/>
            <person name="Kumagai A."/>
            <person name="Itakura S."/>
            <person name="Fukuzumi Y."/>
            <person name="Fujimori Y."/>
            <person name="Komiyama M."/>
            <person name="Tashiro H."/>
            <person name="Tanigami A."/>
            <person name="Fujiwara T."/>
            <person name="Ono T."/>
            <person name="Yamada K."/>
            <person name="Fujii Y."/>
            <person name="Ozaki K."/>
            <person name="Hirao M."/>
            <person name="Ohmori Y."/>
            <person name="Kawabata A."/>
            <person name="Hikiji T."/>
            <person name="Kobatake N."/>
            <person name="Inagaki H."/>
            <person name="Ikema Y."/>
            <person name="Okamoto S."/>
            <person name="Okitani R."/>
            <person name="Kawakami T."/>
            <person name="Noguchi S."/>
            <person name="Itoh T."/>
            <person name="Shigeta K."/>
            <person name="Senba T."/>
            <person name="Matsumura K."/>
            <person name="Nakajima Y."/>
            <person name="Mizuno T."/>
            <person name="Morinaga M."/>
            <person name="Sasaki M."/>
            <person name="Togashi T."/>
            <person name="Oyama M."/>
            <person name="Hata H."/>
            <person name="Watanabe M."/>
            <person name="Komatsu T."/>
            <person name="Mizushima-Sugano J."/>
            <person name="Satoh T."/>
            <person name="Shirai Y."/>
            <person name="Takahashi Y."/>
            <person name="Nakagawa K."/>
            <person name="Okumura K."/>
            <person name="Nagase T."/>
            <person name="Nomura N."/>
            <person name="Kikuchi H."/>
            <person name="Masuho Y."/>
            <person name="Yamashita R."/>
            <person name="Nakai K."/>
            <person name="Yada T."/>
            <person name="Nakamura Y."/>
            <person name="Ohara O."/>
            <person name="Isogai T."/>
            <person name="Sugano S."/>
        </authorList>
    </citation>
    <scope>NUCLEOTIDE SEQUENCE [LARGE SCALE MRNA]</scope>
    <source>
        <tissue>Thymus</tissue>
    </source>
</reference>
<reference key="6">
    <citation type="journal article" date="2004" name="Genome Res.">
        <title>The status, quality, and expansion of the NIH full-length cDNA project: the Mammalian Gene Collection (MGC).</title>
        <authorList>
            <consortium name="The MGC Project Team"/>
        </authorList>
    </citation>
    <scope>NUCLEOTIDE SEQUENCE [LARGE SCALE MRNA]</scope>
    <source>
        <tissue>Bone marrow</tissue>
        <tissue>Eye</tissue>
        <tissue>Lung</tissue>
        <tissue>Mammary gland</tissue>
        <tissue>Muscle</tissue>
        <tissue>Skin</tissue>
    </source>
</reference>
<reference key="7">
    <citation type="submission" date="2007-07" db="UniProtKB">
        <authorList>
            <person name="Bienvenut W.V."/>
            <person name="Boldt K."/>
            <person name="von Kriegsheim A.F."/>
            <person name="Kolch W."/>
        </authorList>
    </citation>
    <scope>PROTEIN SEQUENCE OF 1-7; 10-20; 48-53; 77-88; 107-113; 128-156; 167-177; 201-212 AND 224-242</scope>
    <scope>ACETYLATION AT MET-1</scope>
    <scope>IDENTIFICATION BY MASS SPECTROMETRY</scope>
    <source>
        <tissue>Hepatoma</tissue>
    </source>
</reference>
<reference key="8">
    <citation type="journal article" date="1995" name="Nucleic Acids Res.">
        <title>Human ribosomal protein L7 inhibits cell-free translation in reticulocyte lysates and affects the expression of nuclear proteins upon stable transfection into Jurkat T-lymphoma cells.</title>
        <authorList>
            <person name="Neumann F."/>
            <person name="Hemmerich P."/>
            <person name="von Mikecz A."/>
            <person name="Peter H.-H."/>
            <person name="Krawinkel U."/>
        </authorList>
    </citation>
    <scope>CHARACTERIZATION</scope>
</reference>
<reference key="9">
    <citation type="journal article" date="2003" name="J. Protein Chem.">
        <title>Characterization and analysis of posttranslational modifications of the human large cytoplasmic ribosomal subunit proteins by mass spectrometry and Edman sequencing.</title>
        <authorList>
            <person name="Odintsova T.I."/>
            <person name="Muller E.C."/>
            <person name="Ivanov A.V."/>
            <person name="Egorov T.A."/>
            <person name="Bienert R."/>
            <person name="Vladimirov S.N."/>
            <person name="Kostka S."/>
            <person name="Otto A."/>
            <person name="Wittmann-Liebold B."/>
            <person name="Karpova G.G."/>
        </authorList>
    </citation>
    <scope>ACETYLATION AT MET-1</scope>
    <scope>IDENTIFICATION BY MASS SPECTROMETRY</scope>
    <scope>FUNCTION</scope>
    <scope>SUBUNIT</scope>
</reference>
<reference key="10">
    <citation type="journal article" date="2003" name="Nature">
        <title>Proteomic characterization of the human centrosome by protein correlation profiling.</title>
        <authorList>
            <person name="Andersen J.S."/>
            <person name="Wilkinson C.J."/>
            <person name="Mayor T."/>
            <person name="Mortensen P."/>
            <person name="Nigg E.A."/>
            <person name="Mann M."/>
        </authorList>
    </citation>
    <scope>IDENTIFICATION BY MASS SPECTROMETRY</scope>
    <source>
        <tissue>Lymphoblast</tissue>
    </source>
</reference>
<reference key="11">
    <citation type="journal article" date="2005" name="Nat. Biotechnol.">
        <title>Immunoaffinity profiling of tyrosine phosphorylation in cancer cells.</title>
        <authorList>
            <person name="Rush J."/>
            <person name="Moritz A."/>
            <person name="Lee K.A."/>
            <person name="Guo A."/>
            <person name="Goss V.L."/>
            <person name="Spek E.J."/>
            <person name="Zhang H."/>
            <person name="Zha X.-M."/>
            <person name="Polakiewicz R.D."/>
            <person name="Comb M.J."/>
        </authorList>
    </citation>
    <scope>PHOSPHORYLATION [LARGE SCALE ANALYSIS] AT TYR-139</scope>
    <scope>IDENTIFICATION BY MASS SPECTROMETRY [LARGE SCALE ANALYSIS]</scope>
</reference>
<reference key="12">
    <citation type="journal article" date="2009" name="Anal. Chem.">
        <title>Lys-N and trypsin cover complementary parts of the phosphoproteome in a refined SCX-based approach.</title>
        <authorList>
            <person name="Gauci S."/>
            <person name="Helbig A.O."/>
            <person name="Slijper M."/>
            <person name="Krijgsveld J."/>
            <person name="Heck A.J."/>
            <person name="Mohammed S."/>
        </authorList>
    </citation>
    <scope>ACETYLATION [LARGE SCALE ANALYSIS] AT MET-1</scope>
    <scope>IDENTIFICATION BY MASS SPECTROMETRY [LARGE SCALE ANALYSIS]</scope>
</reference>
<reference key="13">
    <citation type="journal article" date="2009" name="Science">
        <title>Lysine acetylation targets protein complexes and co-regulates major cellular functions.</title>
        <authorList>
            <person name="Choudhary C."/>
            <person name="Kumar C."/>
            <person name="Gnad F."/>
            <person name="Nielsen M.L."/>
            <person name="Rehman M."/>
            <person name="Walther T.C."/>
            <person name="Olsen J.V."/>
            <person name="Mann M."/>
        </authorList>
    </citation>
    <scope>ACETYLATION [LARGE SCALE ANALYSIS] AT LYS-124</scope>
    <scope>IDENTIFICATION BY MASS SPECTROMETRY [LARGE SCALE ANALYSIS]</scope>
</reference>
<reference key="14">
    <citation type="journal article" date="2011" name="BMC Syst. Biol.">
        <title>Initial characterization of the human central proteome.</title>
        <authorList>
            <person name="Burkard T.R."/>
            <person name="Planyavsky M."/>
            <person name="Kaupe I."/>
            <person name="Breitwieser F.P."/>
            <person name="Buerckstuemmer T."/>
            <person name="Bennett K.L."/>
            <person name="Superti-Furga G."/>
            <person name="Colinge J."/>
        </authorList>
    </citation>
    <scope>IDENTIFICATION BY MASS SPECTROMETRY [LARGE SCALE ANALYSIS]</scope>
</reference>
<reference key="15">
    <citation type="journal article" date="2012" name="Proc. Natl. Acad. Sci. U.S.A.">
        <title>N-terminal acetylome analyses and functional insights of the N-terminal acetyltransferase NatB.</title>
        <authorList>
            <person name="Van Damme P."/>
            <person name="Lasa M."/>
            <person name="Polevoda B."/>
            <person name="Gazquez C."/>
            <person name="Elosegui-Artola A."/>
            <person name="Kim D.S."/>
            <person name="De Juan-Pardo E."/>
            <person name="Demeyer K."/>
            <person name="Hole K."/>
            <person name="Larrea E."/>
            <person name="Timmerman E."/>
            <person name="Prieto J."/>
            <person name="Arnesen T."/>
            <person name="Sherman F."/>
            <person name="Gevaert K."/>
            <person name="Aldabe R."/>
        </authorList>
    </citation>
    <scope>ACETYLATION [LARGE SCALE ANALYSIS] AT MET-1</scope>
    <scope>IDENTIFICATION BY MASS SPECTROMETRY [LARGE SCALE ANALYSIS]</scope>
</reference>
<reference key="16">
    <citation type="journal article" date="2013" name="J. Proteome Res.">
        <title>Toward a comprehensive characterization of a human cancer cell phosphoproteome.</title>
        <authorList>
            <person name="Zhou H."/>
            <person name="Di Palma S."/>
            <person name="Preisinger C."/>
            <person name="Peng M."/>
            <person name="Polat A.N."/>
            <person name="Heck A.J."/>
            <person name="Mohammed S."/>
        </authorList>
    </citation>
    <scope>PHOSPHORYLATION [LARGE SCALE ANALYSIS] AT THR-17</scope>
    <scope>IDENTIFICATION BY MASS SPECTROMETRY [LARGE SCALE ANALYSIS]</scope>
    <source>
        <tissue>Cervix carcinoma</tissue>
        <tissue>Erythroleukemia</tissue>
    </source>
</reference>
<reference key="17">
    <citation type="journal article" date="2014" name="Curr. Opin. Struct. Biol.">
        <title>A new system for naming ribosomal proteins.</title>
        <authorList>
            <person name="Ban N."/>
            <person name="Beckmann R."/>
            <person name="Cate J.H.D."/>
            <person name="Dinman J.D."/>
            <person name="Dragon F."/>
            <person name="Ellis S.R."/>
            <person name="Lafontaine D.L.J."/>
            <person name="Lindahl L."/>
            <person name="Liljas A."/>
            <person name="Lipton J.M."/>
            <person name="McAlear M.A."/>
            <person name="Moore P.B."/>
            <person name="Noller H.F."/>
            <person name="Ortega J."/>
            <person name="Panse V.G."/>
            <person name="Ramakrishnan V."/>
            <person name="Spahn C.M.T."/>
            <person name="Steitz T.A."/>
            <person name="Tchorzewski M."/>
            <person name="Tollervey D."/>
            <person name="Warren A.J."/>
            <person name="Williamson J.R."/>
            <person name="Wilson D."/>
            <person name="Yonath A."/>
            <person name="Yusupov M."/>
        </authorList>
    </citation>
    <scope>NOMENCLATURE</scope>
</reference>
<reference key="18">
    <citation type="journal article" date="2014" name="J. Proteomics">
        <title>An enzyme assisted RP-RPLC approach for in-depth analysis of human liver phosphoproteome.</title>
        <authorList>
            <person name="Bian Y."/>
            <person name="Song C."/>
            <person name="Cheng K."/>
            <person name="Dong M."/>
            <person name="Wang F."/>
            <person name="Huang J."/>
            <person name="Sun D."/>
            <person name="Wang L."/>
            <person name="Ye M."/>
            <person name="Zou H."/>
        </authorList>
    </citation>
    <scope>IDENTIFICATION BY MASS SPECTROMETRY [LARGE SCALE ANALYSIS]</scope>
    <source>
        <tissue>Liver</tissue>
    </source>
</reference>
<reference key="19">
    <citation type="journal article" date="2015" name="Mol. Cell. Biol.">
        <title>The DHX33 RNA Helicase Promotes mRNA Translation Initiation.</title>
        <authorList>
            <person name="Zhang Y."/>
            <person name="You J."/>
            <person name="Wang X."/>
            <person name="Weber J."/>
        </authorList>
    </citation>
    <scope>INTERACTION WITH DHX33</scope>
</reference>
<reference key="20">
    <citation type="journal article" date="2015" name="Proteomics">
        <title>N-terminome analysis of the human mitochondrial proteome.</title>
        <authorList>
            <person name="Vaca Jacome A.S."/>
            <person name="Rabilloud T."/>
            <person name="Schaeffer-Reiss C."/>
            <person name="Rompais M."/>
            <person name="Ayoub D."/>
            <person name="Lane L."/>
            <person name="Bairoch A."/>
            <person name="Van Dorsselaer A."/>
            <person name="Carapito C."/>
        </authorList>
    </citation>
    <scope>IDENTIFICATION BY MASS SPECTROMETRY [LARGE SCALE ANALYSIS]</scope>
</reference>
<reference key="21">
    <citation type="journal article" date="2013" name="Nature">
        <title>Structures of the human and Drosophila 80S ribosome.</title>
        <authorList>
            <person name="Anger A.M."/>
            <person name="Armache J.P."/>
            <person name="Berninghausen O."/>
            <person name="Habeck M."/>
            <person name="Subklewe M."/>
            <person name="Wilson D.N."/>
            <person name="Beckmann R."/>
        </authorList>
    </citation>
    <scope>STRUCTURE BY ELECTRON MICROSCOPY (5.0 ANGSTROMS) OF 80S RIBOSOME</scope>
    <scope>FUNCTION</scope>
    <scope>SUBUNIT</scope>
    <scope>SUBCELLULAR LOCATION</scope>
</reference>
<reference evidence="10 11 12 13" key="22">
    <citation type="journal article" date="2020" name="Nat. Commun.">
        <title>Structural snapshots of human pre-60S ribosomal particles before and after nuclear export.</title>
        <authorList>
            <person name="Liang X."/>
            <person name="Zuo M.Q."/>
            <person name="Zhang Y."/>
            <person name="Li N."/>
            <person name="Ma C."/>
            <person name="Dong M.Q."/>
            <person name="Gao N."/>
        </authorList>
    </citation>
    <scope>STRUCTURE BY ELECTRON MICROSCOPY (3.09 ANGSTROMS)</scope>
    <scope>FUNCTION</scope>
    <scope>SUBUNIT</scope>
</reference>
<name>RL7_HUMAN</name>
<feature type="chain" id="PRO_0000104633" description="Large ribosomal subunit protein uL30">
    <location>
        <begin position="1"/>
        <end position="248"/>
    </location>
</feature>
<feature type="repeat" description="1">
    <location>
        <begin position="7"/>
        <end position="18"/>
    </location>
</feature>
<feature type="repeat" description="2">
    <location>
        <begin position="19"/>
        <end position="30"/>
    </location>
</feature>
<feature type="repeat" description="3">
    <location>
        <begin position="31"/>
        <end position="42"/>
    </location>
</feature>
<feature type="repeat" description="4">
    <location>
        <begin position="43"/>
        <end position="54"/>
    </location>
</feature>
<feature type="region of interest" description="4 X 12 AA tandem repeats">
    <location>
        <begin position="7"/>
        <end position="54"/>
    </location>
</feature>
<feature type="modified residue" description="N-acetylmethionine" evidence="2 6 15 17">
    <location>
        <position position="1"/>
    </location>
</feature>
<feature type="modified residue" description="Phosphothreonine" evidence="18">
    <location>
        <position position="17"/>
    </location>
</feature>
<feature type="modified residue" description="N6-acetyllysine" evidence="16">
    <location>
        <position position="124"/>
    </location>
</feature>
<feature type="modified residue" description="N6-succinyllysine" evidence="1">
    <location>
        <position position="127"/>
    </location>
</feature>
<feature type="modified residue" description="Phosphotyrosine" evidence="14">
    <location>
        <position position="139"/>
    </location>
</feature>
<feature type="sequence conflict" description="In Ref. 4; CAG33054." evidence="8" ref="4">
    <original>K</original>
    <variation>E</variation>
    <location>
        <position position="48"/>
    </location>
</feature>
<feature type="sequence conflict" description="In Ref. 1; CAA41026/CAA41027." evidence="8" ref="1">
    <original>R</original>
    <variation>L</variation>
    <location>
        <position position="157"/>
    </location>
</feature>
<feature type="sequence conflict" description="In Ref. 1; CAA41026." evidence="8" ref="1">
    <original>G</original>
    <variation>A</variation>
    <location>
        <position position="160"/>
    </location>
</feature>
<feature type="sequence conflict" description="In Ref. 1; CAA41026." evidence="8" ref="1">
    <original>R</original>
    <variation>Q</variation>
    <location>
        <position position="166"/>
    </location>
</feature>
<feature type="sequence conflict" description="In Ref. 2; AAA03081." evidence="8" ref="2">
    <original>A</original>
    <variation>S</variation>
    <location>
        <position position="173"/>
    </location>
</feature>
<feature type="sequence conflict" description="In Ref. 4; CAG33054." evidence="8" ref="4">
    <original>H</original>
    <variation>R</variation>
    <location>
        <position position="192"/>
    </location>
</feature>